<gene>
    <name evidence="2" type="primary">groEL</name>
    <name evidence="2" type="synonym">groL</name>
    <name type="synonym">hsp60</name>
    <name type="synonym">mopA</name>
</gene>
<dbReference type="EC" id="5.6.1.7" evidence="2"/>
<dbReference type="EMBL" id="U13618">
    <property type="protein sequence ID" value="AAA21334.1"/>
    <property type="molecule type" value="Genomic_DNA"/>
</dbReference>
<dbReference type="SMR" id="P0C0N6"/>
<dbReference type="GO" id="GO:0005737">
    <property type="term" value="C:cytoplasm"/>
    <property type="evidence" value="ECO:0007669"/>
    <property type="project" value="UniProtKB-SubCell"/>
</dbReference>
<dbReference type="GO" id="GO:0005524">
    <property type="term" value="F:ATP binding"/>
    <property type="evidence" value="ECO:0007669"/>
    <property type="project" value="UniProtKB-UniRule"/>
</dbReference>
<dbReference type="GO" id="GO:0140662">
    <property type="term" value="F:ATP-dependent protein folding chaperone"/>
    <property type="evidence" value="ECO:0007669"/>
    <property type="project" value="InterPro"/>
</dbReference>
<dbReference type="GO" id="GO:0016853">
    <property type="term" value="F:isomerase activity"/>
    <property type="evidence" value="ECO:0007669"/>
    <property type="project" value="UniProtKB-KW"/>
</dbReference>
<dbReference type="GO" id="GO:0051082">
    <property type="term" value="F:unfolded protein binding"/>
    <property type="evidence" value="ECO:0007669"/>
    <property type="project" value="UniProtKB-UniRule"/>
</dbReference>
<dbReference type="GO" id="GO:0042026">
    <property type="term" value="P:protein refolding"/>
    <property type="evidence" value="ECO:0007669"/>
    <property type="project" value="UniProtKB-UniRule"/>
</dbReference>
<dbReference type="CDD" id="cd03344">
    <property type="entry name" value="GroEL"/>
    <property type="match status" value="1"/>
</dbReference>
<dbReference type="FunFam" id="3.50.7.10:FF:000001">
    <property type="entry name" value="60 kDa chaperonin"/>
    <property type="match status" value="1"/>
</dbReference>
<dbReference type="Gene3D" id="3.50.7.10">
    <property type="entry name" value="GroEL"/>
    <property type="match status" value="1"/>
</dbReference>
<dbReference type="Gene3D" id="1.10.560.10">
    <property type="entry name" value="GroEL-like equatorial domain"/>
    <property type="match status" value="1"/>
</dbReference>
<dbReference type="Gene3D" id="3.30.260.10">
    <property type="entry name" value="TCP-1-like chaperonin intermediate domain"/>
    <property type="match status" value="1"/>
</dbReference>
<dbReference type="HAMAP" id="MF_00600">
    <property type="entry name" value="CH60"/>
    <property type="match status" value="1"/>
</dbReference>
<dbReference type="InterPro" id="IPR018370">
    <property type="entry name" value="Chaperonin_Cpn60_CS"/>
</dbReference>
<dbReference type="InterPro" id="IPR001844">
    <property type="entry name" value="Cpn60/GroEL"/>
</dbReference>
<dbReference type="InterPro" id="IPR002423">
    <property type="entry name" value="Cpn60/GroEL/TCP-1"/>
</dbReference>
<dbReference type="InterPro" id="IPR027409">
    <property type="entry name" value="GroEL-like_apical_dom_sf"/>
</dbReference>
<dbReference type="InterPro" id="IPR027413">
    <property type="entry name" value="GROEL-like_equatorial_sf"/>
</dbReference>
<dbReference type="InterPro" id="IPR027410">
    <property type="entry name" value="TCP-1-like_intermed_sf"/>
</dbReference>
<dbReference type="NCBIfam" id="TIGR02348">
    <property type="entry name" value="GroEL"/>
    <property type="match status" value="1"/>
</dbReference>
<dbReference type="NCBIfam" id="NF000592">
    <property type="entry name" value="PRK00013.1"/>
    <property type="match status" value="1"/>
</dbReference>
<dbReference type="NCBIfam" id="NF009487">
    <property type="entry name" value="PRK12849.1"/>
    <property type="match status" value="1"/>
</dbReference>
<dbReference type="NCBIfam" id="NF009488">
    <property type="entry name" value="PRK12850.1"/>
    <property type="match status" value="1"/>
</dbReference>
<dbReference type="NCBIfam" id="NF009489">
    <property type="entry name" value="PRK12851.1"/>
    <property type="match status" value="1"/>
</dbReference>
<dbReference type="PANTHER" id="PTHR45633">
    <property type="entry name" value="60 KDA HEAT SHOCK PROTEIN, MITOCHONDRIAL"/>
    <property type="match status" value="1"/>
</dbReference>
<dbReference type="Pfam" id="PF00118">
    <property type="entry name" value="Cpn60_TCP1"/>
    <property type="match status" value="1"/>
</dbReference>
<dbReference type="PRINTS" id="PR00298">
    <property type="entry name" value="CHAPERONIN60"/>
</dbReference>
<dbReference type="SUPFAM" id="SSF52029">
    <property type="entry name" value="GroEL apical domain-like"/>
    <property type="match status" value="1"/>
</dbReference>
<dbReference type="SUPFAM" id="SSF48592">
    <property type="entry name" value="GroEL equatorial domain-like"/>
    <property type="match status" value="1"/>
</dbReference>
<dbReference type="SUPFAM" id="SSF54849">
    <property type="entry name" value="GroEL-intermediate domain like"/>
    <property type="match status" value="1"/>
</dbReference>
<dbReference type="PROSITE" id="PS00296">
    <property type="entry name" value="CHAPERONINS_CPN60"/>
    <property type="match status" value="1"/>
</dbReference>
<name>CH60_STAEP</name>
<proteinExistence type="inferred from homology"/>
<feature type="initiator methionine" description="Removed" evidence="1">
    <location>
        <position position="1"/>
    </location>
</feature>
<feature type="chain" id="PRO_0000063538" description="Chaperonin GroEL">
    <location>
        <begin position="2"/>
        <end position="539"/>
    </location>
</feature>
<feature type="binding site" evidence="2">
    <location>
        <begin position="29"/>
        <end position="32"/>
    </location>
    <ligand>
        <name>ATP</name>
        <dbReference type="ChEBI" id="CHEBI:30616"/>
    </ligand>
</feature>
<feature type="binding site" evidence="2">
    <location>
        <begin position="86"/>
        <end position="90"/>
    </location>
    <ligand>
        <name>ATP</name>
        <dbReference type="ChEBI" id="CHEBI:30616"/>
    </ligand>
</feature>
<feature type="binding site" evidence="2">
    <location>
        <position position="413"/>
    </location>
    <ligand>
        <name>ATP</name>
        <dbReference type="ChEBI" id="CHEBI:30616"/>
    </ligand>
</feature>
<feature type="binding site" evidence="2">
    <location>
        <begin position="476"/>
        <end position="478"/>
    </location>
    <ligand>
        <name>ATP</name>
        <dbReference type="ChEBI" id="CHEBI:30616"/>
    </ligand>
</feature>
<feature type="binding site" evidence="2">
    <location>
        <position position="492"/>
    </location>
    <ligand>
        <name>ATP</name>
        <dbReference type="ChEBI" id="CHEBI:30616"/>
    </ligand>
</feature>
<comment type="function">
    <text evidence="2">Together with its co-chaperonin GroES, plays an essential role in assisting protein folding. The GroEL-GroES system forms a nano-cage that allows encapsulation of the non-native substrate proteins and provides a physical environment optimized to promote and accelerate protein folding.</text>
</comment>
<comment type="catalytic activity">
    <reaction evidence="2">
        <text>ATP + H2O + a folded polypeptide = ADP + phosphate + an unfolded polypeptide.</text>
        <dbReference type="EC" id="5.6.1.7"/>
    </reaction>
</comment>
<comment type="subunit">
    <text evidence="2">Forms a cylinder of 14 subunits composed of two heptameric rings stacked back-to-back. Interacts with the co-chaperonin GroES.</text>
</comment>
<comment type="subcellular location">
    <subcellularLocation>
        <location evidence="2">Cytoplasm</location>
    </subcellularLocation>
</comment>
<comment type="similarity">
    <text evidence="2">Belongs to the chaperonin (HSP60) family.</text>
</comment>
<sequence>MAKDLKFSEDARQAMLRGVDKLANAVKVTIGPKGRNVVLDKDYTTPLITNDGVTIAKEIELEDPYENMGAKLVQEVANKTNEIAGDGTTTATVLAQSMIQEGLKNVTSGANPVGLRQGIDKAVQVAIEALHEISQKVENKNEIAQVGAISAADEEIGRYISEAMDKVGNDGVITIEESNGFNTELEVAEGMQFDRGYQSPYMVTDSDKMIAELERPYILVTDKKISSFQDILPLLEQVVQASRPILIVADEVEGDALTNIVLNRMRGTFTAVAVKAPGFGDRRKAMLEDLAILTGAQVITDDLGLELKDASLDMLGTANKVEVTKDHTTVVDGNGDENNIDARVGQIKAQIEETDSECDKEKLQERVAKLAGGVAVIKVGAASDTELKERKLRIEDALNSTRAAVEEGIVAGGGTALVNIYQKVSEIKAEGDVETGVNIVLKALQAPVRQIAENAGLEGSIIVERLKHAEAGVGFNAATNEWVNMLEEGIVDPTKVTRSALQHAASVAAMFLTTEAVVASIPEPENNEQPGMGGMPGMM</sequence>
<protein>
    <recommendedName>
        <fullName evidence="2">Chaperonin GroEL</fullName>
        <ecNumber evidence="2">5.6.1.7</ecNumber>
    </recommendedName>
    <alternativeName>
        <fullName evidence="2">60 kDa chaperonin</fullName>
    </alternativeName>
    <alternativeName>
        <fullName evidence="2">Chaperonin-60</fullName>
        <shortName evidence="2">Cpn60</shortName>
    </alternativeName>
</protein>
<reference key="1">
    <citation type="submission" date="1994-08" db="EMBL/GenBank/DDBJ databases">
        <title>Analysis of cloned hsp60 and hsp10 genes from Staphylococcus epidermidis.</title>
        <authorList>
            <person name="Goh S.H."/>
            <person name="Wood J."/>
            <person name="Hemmingsen S."/>
            <person name="Chow A.W."/>
        </authorList>
    </citation>
    <scope>NUCLEOTIDE SEQUENCE [GENOMIC DNA]</scope>
    <source>
        <strain>9759</strain>
    </source>
</reference>
<evidence type="ECO:0000250" key="1"/>
<evidence type="ECO:0000255" key="2">
    <source>
        <dbReference type="HAMAP-Rule" id="MF_00600"/>
    </source>
</evidence>
<keyword id="KW-0067">ATP-binding</keyword>
<keyword id="KW-0143">Chaperone</keyword>
<keyword id="KW-0963">Cytoplasm</keyword>
<keyword id="KW-0413">Isomerase</keyword>
<keyword id="KW-0547">Nucleotide-binding</keyword>
<keyword id="KW-0346">Stress response</keyword>
<organism>
    <name type="scientific">Staphylococcus epidermidis</name>
    <dbReference type="NCBI Taxonomy" id="1282"/>
    <lineage>
        <taxon>Bacteria</taxon>
        <taxon>Bacillati</taxon>
        <taxon>Bacillota</taxon>
        <taxon>Bacilli</taxon>
        <taxon>Bacillales</taxon>
        <taxon>Staphylococcaceae</taxon>
        <taxon>Staphylococcus</taxon>
    </lineage>
</organism>
<accession>P0C0N6</accession>
<accession>P48218</accession>